<reference key="1">
    <citation type="submission" date="2008-10" db="EMBL/GenBank/DDBJ databases">
        <title>Genome sequence of Clostridium botulinum A2 Kyoto.</title>
        <authorList>
            <person name="Shrivastava S."/>
            <person name="Brinkac L.M."/>
            <person name="Brown J.L."/>
            <person name="Bruce D."/>
            <person name="Detter C.C."/>
            <person name="Johnson E.A."/>
            <person name="Munk C.A."/>
            <person name="Smith L.A."/>
            <person name="Smith T.J."/>
            <person name="Sutton G."/>
            <person name="Brettin T.S."/>
        </authorList>
    </citation>
    <scope>NUCLEOTIDE SEQUENCE [LARGE SCALE GENOMIC DNA]</scope>
    <source>
        <strain>Kyoto / Type A2</strain>
    </source>
</reference>
<protein>
    <recommendedName>
        <fullName evidence="1">DNA mismatch repair protein MutS</fullName>
    </recommendedName>
</protein>
<evidence type="ECO:0000255" key="1">
    <source>
        <dbReference type="HAMAP-Rule" id="MF_00096"/>
    </source>
</evidence>
<accession>C1FNT9</accession>
<keyword id="KW-0067">ATP-binding</keyword>
<keyword id="KW-0227">DNA damage</keyword>
<keyword id="KW-0234">DNA repair</keyword>
<keyword id="KW-0238">DNA-binding</keyword>
<keyword id="KW-0547">Nucleotide-binding</keyword>
<gene>
    <name evidence="1" type="primary">mutS</name>
    <name type="ordered locus">CLM_1957</name>
</gene>
<comment type="function">
    <text evidence="1">This protein is involved in the repair of mismatches in DNA. It is possible that it carries out the mismatch recognition step. This protein has a weak ATPase activity.</text>
</comment>
<comment type="similarity">
    <text evidence="1">Belongs to the DNA mismatch repair MutS family.</text>
</comment>
<name>MUTS_CLOBJ</name>
<sequence>MGLTPMMRQYLEVKESCKDCILFFRLGDFYEMFFEDAKVASKELELVLTGRDCGLEERAPMCGIPYHAANTYIGRLVSAGYKIAICEQLEDPSASKGIVKRGIIKIITPGTYTDSSFLEENKNNYIMSFYLDDNMCAMSFADISTGEFNSTHSNFKEAVVLDEISKFAPREIVLEENIKESFIHTIKERFPNISISKIKEENFDYNIDNNLKEQFNNFNENEYETIVKKSANGLLYYIFHTQKNILSNINKIDYYSIVDYLTIDVNSRRNLEITENLREKTKKGSLLWVLDKTNTAMGGRQLRRWIEQPLINKNPIENRLNAVEELLNNISLQEDLKEDLKSIYDIERIVGKVASKSVNAKELISLKCSIGKVPYIKKYLSGFKSDLFLNMEQCIDTLEDIHKLLDKALLDNPSLSVKEGNIIKEGFNEEVDSLREAKSNGKKWIASLEQKEKEETGIKSLKVSYNKVFGYFIEITKANLNLVPEGRYIRKQTLSNAERYITPELKEMEEKILGAEEKLIDIEYKLFTEIRDFIEENIDRMQKTARIISDIDCLCSLATVALENNYIKPNINAKDEILIEEGRHPVVEKVIPKGEFISNDSLIDTKENQLILITGPNMAGKSTYMRQVALITIMAQIGSFVPAKKANISICDKIFTRIGASDDLAAGKSTFMVEMWEVSNILKNATSKSLVLLDEVGRGTSTYDGLSIAWSVIEYICNNKNLRCKTLFATHYHELTKLEDNIEGVKNYSVSVSELENEIVFLRKIIRGGADQSYGIEVAKLAGLPSPVINRAKEILQHIEGDKEENSLNIAPSKEYKSKDYIEVSKDTLNTKNNLGSEIKHDTLSETNTATIIEDESTKEHLSSNRKQINCRINDEKSIKKEVAVDSFQINFEYIKRDKIIEEIKNIDILNMTPMEGFNKLYDIINKTKDID</sequence>
<dbReference type="EMBL" id="CP001581">
    <property type="protein sequence ID" value="ACO86767.1"/>
    <property type="molecule type" value="Genomic_DNA"/>
</dbReference>
<dbReference type="RefSeq" id="WP_003359082.1">
    <property type="nucleotide sequence ID" value="NC_012563.1"/>
</dbReference>
<dbReference type="SMR" id="C1FNT9"/>
<dbReference type="KEGG" id="cby:CLM_1957"/>
<dbReference type="eggNOG" id="COG0249">
    <property type="taxonomic scope" value="Bacteria"/>
</dbReference>
<dbReference type="HOGENOM" id="CLU_002472_3_1_9"/>
<dbReference type="Proteomes" id="UP000001374">
    <property type="component" value="Chromosome"/>
</dbReference>
<dbReference type="GO" id="GO:0005829">
    <property type="term" value="C:cytosol"/>
    <property type="evidence" value="ECO:0007669"/>
    <property type="project" value="TreeGrafter"/>
</dbReference>
<dbReference type="GO" id="GO:0005524">
    <property type="term" value="F:ATP binding"/>
    <property type="evidence" value="ECO:0007669"/>
    <property type="project" value="UniProtKB-UniRule"/>
</dbReference>
<dbReference type="GO" id="GO:0140664">
    <property type="term" value="F:ATP-dependent DNA damage sensor activity"/>
    <property type="evidence" value="ECO:0007669"/>
    <property type="project" value="InterPro"/>
</dbReference>
<dbReference type="GO" id="GO:0003684">
    <property type="term" value="F:damaged DNA binding"/>
    <property type="evidence" value="ECO:0007669"/>
    <property type="project" value="UniProtKB-UniRule"/>
</dbReference>
<dbReference type="GO" id="GO:0030983">
    <property type="term" value="F:mismatched DNA binding"/>
    <property type="evidence" value="ECO:0007669"/>
    <property type="project" value="InterPro"/>
</dbReference>
<dbReference type="GO" id="GO:0006298">
    <property type="term" value="P:mismatch repair"/>
    <property type="evidence" value="ECO:0007669"/>
    <property type="project" value="UniProtKB-UniRule"/>
</dbReference>
<dbReference type="CDD" id="cd03284">
    <property type="entry name" value="ABC_MutS1"/>
    <property type="match status" value="1"/>
</dbReference>
<dbReference type="FunFam" id="1.10.1420.10:FF:000007">
    <property type="entry name" value="DNA mismatch repair protein MutS"/>
    <property type="match status" value="1"/>
</dbReference>
<dbReference type="FunFam" id="3.40.1170.10:FF:000001">
    <property type="entry name" value="DNA mismatch repair protein MutS"/>
    <property type="match status" value="1"/>
</dbReference>
<dbReference type="FunFam" id="3.40.50.300:FF:001579">
    <property type="entry name" value="DNA mismatch repair protein MutS"/>
    <property type="match status" value="1"/>
</dbReference>
<dbReference type="Gene3D" id="1.10.1420.10">
    <property type="match status" value="2"/>
</dbReference>
<dbReference type="Gene3D" id="3.40.1170.10">
    <property type="entry name" value="DNA repair protein MutS, domain I"/>
    <property type="match status" value="1"/>
</dbReference>
<dbReference type="Gene3D" id="3.30.420.110">
    <property type="entry name" value="MutS, connector domain"/>
    <property type="match status" value="1"/>
</dbReference>
<dbReference type="Gene3D" id="3.40.50.300">
    <property type="entry name" value="P-loop containing nucleotide triphosphate hydrolases"/>
    <property type="match status" value="1"/>
</dbReference>
<dbReference type="HAMAP" id="MF_00096">
    <property type="entry name" value="MutS"/>
    <property type="match status" value="1"/>
</dbReference>
<dbReference type="InterPro" id="IPR005748">
    <property type="entry name" value="DNA_mismatch_repair_MutS"/>
</dbReference>
<dbReference type="InterPro" id="IPR007695">
    <property type="entry name" value="DNA_mismatch_repair_MutS-lik_N"/>
</dbReference>
<dbReference type="InterPro" id="IPR017261">
    <property type="entry name" value="DNA_mismatch_repair_MutS/MSH"/>
</dbReference>
<dbReference type="InterPro" id="IPR000432">
    <property type="entry name" value="DNA_mismatch_repair_MutS_C"/>
</dbReference>
<dbReference type="InterPro" id="IPR007861">
    <property type="entry name" value="DNA_mismatch_repair_MutS_clamp"/>
</dbReference>
<dbReference type="InterPro" id="IPR007696">
    <property type="entry name" value="DNA_mismatch_repair_MutS_core"/>
</dbReference>
<dbReference type="InterPro" id="IPR016151">
    <property type="entry name" value="DNA_mismatch_repair_MutS_N"/>
</dbReference>
<dbReference type="InterPro" id="IPR036187">
    <property type="entry name" value="DNA_mismatch_repair_MutS_sf"/>
</dbReference>
<dbReference type="InterPro" id="IPR007860">
    <property type="entry name" value="DNA_mmatch_repair_MutS_con_dom"/>
</dbReference>
<dbReference type="InterPro" id="IPR045076">
    <property type="entry name" value="MutS"/>
</dbReference>
<dbReference type="InterPro" id="IPR036678">
    <property type="entry name" value="MutS_con_dom_sf"/>
</dbReference>
<dbReference type="InterPro" id="IPR027417">
    <property type="entry name" value="P-loop_NTPase"/>
</dbReference>
<dbReference type="NCBIfam" id="TIGR01070">
    <property type="entry name" value="mutS1"/>
    <property type="match status" value="1"/>
</dbReference>
<dbReference type="NCBIfam" id="NF003810">
    <property type="entry name" value="PRK05399.1"/>
    <property type="match status" value="1"/>
</dbReference>
<dbReference type="PANTHER" id="PTHR11361:SF34">
    <property type="entry name" value="DNA MISMATCH REPAIR PROTEIN MSH1, MITOCHONDRIAL"/>
    <property type="match status" value="1"/>
</dbReference>
<dbReference type="PANTHER" id="PTHR11361">
    <property type="entry name" value="DNA MISMATCH REPAIR PROTEIN MUTS FAMILY MEMBER"/>
    <property type="match status" value="1"/>
</dbReference>
<dbReference type="Pfam" id="PF01624">
    <property type="entry name" value="MutS_I"/>
    <property type="match status" value="1"/>
</dbReference>
<dbReference type="Pfam" id="PF05188">
    <property type="entry name" value="MutS_II"/>
    <property type="match status" value="1"/>
</dbReference>
<dbReference type="Pfam" id="PF05192">
    <property type="entry name" value="MutS_III"/>
    <property type="match status" value="1"/>
</dbReference>
<dbReference type="Pfam" id="PF05190">
    <property type="entry name" value="MutS_IV"/>
    <property type="match status" value="1"/>
</dbReference>
<dbReference type="Pfam" id="PF00488">
    <property type="entry name" value="MutS_V"/>
    <property type="match status" value="1"/>
</dbReference>
<dbReference type="PIRSF" id="PIRSF037677">
    <property type="entry name" value="DNA_mis_repair_Msh6"/>
    <property type="match status" value="1"/>
</dbReference>
<dbReference type="SMART" id="SM00534">
    <property type="entry name" value="MUTSac"/>
    <property type="match status" value="1"/>
</dbReference>
<dbReference type="SMART" id="SM00533">
    <property type="entry name" value="MUTSd"/>
    <property type="match status" value="1"/>
</dbReference>
<dbReference type="SUPFAM" id="SSF55271">
    <property type="entry name" value="DNA repair protein MutS, domain I"/>
    <property type="match status" value="1"/>
</dbReference>
<dbReference type="SUPFAM" id="SSF53150">
    <property type="entry name" value="DNA repair protein MutS, domain II"/>
    <property type="match status" value="1"/>
</dbReference>
<dbReference type="SUPFAM" id="SSF48334">
    <property type="entry name" value="DNA repair protein MutS, domain III"/>
    <property type="match status" value="1"/>
</dbReference>
<dbReference type="SUPFAM" id="SSF52540">
    <property type="entry name" value="P-loop containing nucleoside triphosphate hydrolases"/>
    <property type="match status" value="1"/>
</dbReference>
<dbReference type="PROSITE" id="PS00486">
    <property type="entry name" value="DNA_MISMATCH_REPAIR_2"/>
    <property type="match status" value="1"/>
</dbReference>
<feature type="chain" id="PRO_1000118677" description="DNA mismatch repair protein MutS">
    <location>
        <begin position="1"/>
        <end position="932"/>
    </location>
</feature>
<feature type="binding site" evidence="1">
    <location>
        <begin position="615"/>
        <end position="622"/>
    </location>
    <ligand>
        <name>ATP</name>
        <dbReference type="ChEBI" id="CHEBI:30616"/>
    </ligand>
</feature>
<proteinExistence type="inferred from homology"/>
<organism>
    <name type="scientific">Clostridium botulinum (strain Kyoto / Type A2)</name>
    <dbReference type="NCBI Taxonomy" id="536232"/>
    <lineage>
        <taxon>Bacteria</taxon>
        <taxon>Bacillati</taxon>
        <taxon>Bacillota</taxon>
        <taxon>Clostridia</taxon>
        <taxon>Eubacteriales</taxon>
        <taxon>Clostridiaceae</taxon>
        <taxon>Clostridium</taxon>
    </lineage>
</organism>